<reference key="1">
    <citation type="journal article" date="1997" name="Nature">
        <title>The complete genome sequence of the hyperthermophilic, sulphate-reducing archaeon Archaeoglobus fulgidus.</title>
        <authorList>
            <person name="Klenk H.-P."/>
            <person name="Clayton R.A."/>
            <person name="Tomb J.-F."/>
            <person name="White O."/>
            <person name="Nelson K.E."/>
            <person name="Ketchum K.A."/>
            <person name="Dodson R.J."/>
            <person name="Gwinn M.L."/>
            <person name="Hickey E.K."/>
            <person name="Peterson J.D."/>
            <person name="Richardson D.L."/>
            <person name="Kerlavage A.R."/>
            <person name="Graham D.E."/>
            <person name="Kyrpides N.C."/>
            <person name="Fleischmann R.D."/>
            <person name="Quackenbush J."/>
            <person name="Lee N.H."/>
            <person name="Sutton G.G."/>
            <person name="Gill S.R."/>
            <person name="Kirkness E.F."/>
            <person name="Dougherty B.A."/>
            <person name="McKenney K."/>
            <person name="Adams M.D."/>
            <person name="Loftus B.J."/>
            <person name="Peterson S.N."/>
            <person name="Reich C.I."/>
            <person name="McNeil L.K."/>
            <person name="Badger J.H."/>
            <person name="Glodek A."/>
            <person name="Zhou L."/>
            <person name="Overbeek R."/>
            <person name="Gocayne J.D."/>
            <person name="Weidman J.F."/>
            <person name="McDonald L.A."/>
            <person name="Utterback T.R."/>
            <person name="Cotton M.D."/>
            <person name="Spriggs T."/>
            <person name="Artiach P."/>
            <person name="Kaine B.P."/>
            <person name="Sykes S.M."/>
            <person name="Sadow P.W."/>
            <person name="D'Andrea K.P."/>
            <person name="Bowman C."/>
            <person name="Fujii C."/>
            <person name="Garland S.A."/>
            <person name="Mason T.M."/>
            <person name="Olsen G.J."/>
            <person name="Fraser C.M."/>
            <person name="Smith H.O."/>
            <person name="Woese C.R."/>
            <person name="Venter J.C."/>
        </authorList>
    </citation>
    <scope>NUCLEOTIDE SEQUENCE [LARGE SCALE GENOMIC DNA]</scope>
    <source>
        <strain>ATCC 49558 / DSM 4304 / JCM 9628 / NBRC 100126 / VC-16</strain>
    </source>
</reference>
<sequence length="88" mass="9810">MGSVMMKIRVMPSDVDVDLNEVLEKIKNIQMEGVEIRDSAIQPIAFGLKAIVLMAVMPDMEGIGDRYIEEIGKIEGVESVEIEDMELL</sequence>
<evidence type="ECO:0000250" key="1"/>
<evidence type="ECO:0000305" key="2"/>
<accession>O29681</accession>
<dbReference type="EMBL" id="AE000782">
    <property type="protein sequence ID" value="AAB90666.1"/>
    <property type="molecule type" value="Genomic_DNA"/>
</dbReference>
<dbReference type="PIR" id="F69321">
    <property type="entry name" value="F69321"/>
</dbReference>
<dbReference type="RefSeq" id="WP_010878078.1">
    <property type="nucleotide sequence ID" value="NC_000917.1"/>
</dbReference>
<dbReference type="SMR" id="O29681"/>
<dbReference type="STRING" id="224325.AF_0574"/>
<dbReference type="PaxDb" id="224325-AF_0574"/>
<dbReference type="EnsemblBacteria" id="AAB90666">
    <property type="protein sequence ID" value="AAB90666"/>
    <property type="gene ID" value="AF_0574"/>
</dbReference>
<dbReference type="GeneID" id="1483791"/>
<dbReference type="KEGG" id="afu:AF_0574"/>
<dbReference type="eggNOG" id="arCOG01988">
    <property type="taxonomic scope" value="Archaea"/>
</dbReference>
<dbReference type="HOGENOM" id="CLU_165896_0_0_2"/>
<dbReference type="OrthoDB" id="84643at2157"/>
<dbReference type="PhylomeDB" id="O29681"/>
<dbReference type="Proteomes" id="UP000002199">
    <property type="component" value="Chromosome"/>
</dbReference>
<dbReference type="GO" id="GO:0003746">
    <property type="term" value="F:translation elongation factor activity"/>
    <property type="evidence" value="ECO:0007669"/>
    <property type="project" value="UniProtKB-UniRule"/>
</dbReference>
<dbReference type="CDD" id="cd00292">
    <property type="entry name" value="EF1B"/>
    <property type="match status" value="1"/>
</dbReference>
<dbReference type="Gene3D" id="3.30.70.60">
    <property type="match status" value="1"/>
</dbReference>
<dbReference type="HAMAP" id="MF_00043">
    <property type="entry name" value="EF1_beta"/>
    <property type="match status" value="1"/>
</dbReference>
<dbReference type="InterPro" id="IPR036219">
    <property type="entry name" value="eEF-1beta-like_sf"/>
</dbReference>
<dbReference type="InterPro" id="IPR014038">
    <property type="entry name" value="EF1B_bsu/dsu_GNE"/>
</dbReference>
<dbReference type="InterPro" id="IPR014717">
    <property type="entry name" value="Transl_elong_EF1B/ribsomal_bS6"/>
</dbReference>
<dbReference type="InterPro" id="IPR004542">
    <property type="entry name" value="Transl_elong_EF1B_B_arc"/>
</dbReference>
<dbReference type="NCBIfam" id="TIGR00489">
    <property type="entry name" value="aEF-1_beta"/>
    <property type="match status" value="1"/>
</dbReference>
<dbReference type="NCBIfam" id="NF001670">
    <property type="entry name" value="PRK00435.1"/>
    <property type="match status" value="1"/>
</dbReference>
<dbReference type="PANTHER" id="PTHR39647">
    <property type="entry name" value="ELONGATION FACTOR 1-BETA"/>
    <property type="match status" value="1"/>
</dbReference>
<dbReference type="PANTHER" id="PTHR39647:SF1">
    <property type="entry name" value="ELONGATION FACTOR 1-BETA"/>
    <property type="match status" value="1"/>
</dbReference>
<dbReference type="Pfam" id="PF00736">
    <property type="entry name" value="EF1_GNE"/>
    <property type="match status" value="1"/>
</dbReference>
<dbReference type="PIRSF" id="PIRSF006521">
    <property type="entry name" value="Transl_elong_EF1B_B_arc"/>
    <property type="match status" value="1"/>
</dbReference>
<dbReference type="SMART" id="SM00888">
    <property type="entry name" value="EF1_GNE"/>
    <property type="match status" value="1"/>
</dbReference>
<dbReference type="SUPFAM" id="SSF54984">
    <property type="entry name" value="eEF-1beta-like"/>
    <property type="match status" value="1"/>
</dbReference>
<comment type="function">
    <text evidence="1">Promotes the exchange of GDP for GTP in EF-1-alpha/GDP, thus allowing the regeneration of EF-1-alpha/GTP that could then be used to form the ternary complex EF-1-alpha/GTP/AAtRNA.</text>
</comment>
<comment type="similarity">
    <text evidence="2">Belongs to the EF-1-beta/EF-1-delta family.</text>
</comment>
<organism>
    <name type="scientific">Archaeoglobus fulgidus (strain ATCC 49558 / DSM 4304 / JCM 9628 / NBRC 100126 / VC-16)</name>
    <dbReference type="NCBI Taxonomy" id="224325"/>
    <lineage>
        <taxon>Archaea</taxon>
        <taxon>Methanobacteriati</taxon>
        <taxon>Methanobacteriota</taxon>
        <taxon>Archaeoglobi</taxon>
        <taxon>Archaeoglobales</taxon>
        <taxon>Archaeoglobaceae</taxon>
        <taxon>Archaeoglobus</taxon>
    </lineage>
</organism>
<name>EF1B_ARCFU</name>
<protein>
    <recommendedName>
        <fullName>Elongation factor 1-beta</fullName>
        <shortName>EF-1-beta</shortName>
    </recommendedName>
    <alternativeName>
        <fullName>aEF-1beta</fullName>
    </alternativeName>
</protein>
<keyword id="KW-0251">Elongation factor</keyword>
<keyword id="KW-0648">Protein biosynthesis</keyword>
<keyword id="KW-1185">Reference proteome</keyword>
<proteinExistence type="inferred from homology"/>
<feature type="chain" id="PRO_0000155054" description="Elongation factor 1-beta">
    <location>
        <begin position="1"/>
        <end position="88"/>
    </location>
</feature>
<gene>
    <name type="primary">ef1b</name>
    <name type="ordered locus">AF_0574</name>
</gene>